<protein>
    <recommendedName>
        <fullName>Transmembrane protein 205</fullName>
    </recommendedName>
</protein>
<dbReference type="EMBL" id="BC072992">
    <property type="protein sequence ID" value="AAH72992.1"/>
    <property type="molecule type" value="mRNA"/>
</dbReference>
<dbReference type="RefSeq" id="NP_001085593.1">
    <property type="nucleotide sequence ID" value="NM_001092124.1"/>
</dbReference>
<dbReference type="RefSeq" id="XP_018106419.1">
    <property type="nucleotide sequence ID" value="XM_018250930.1"/>
</dbReference>
<dbReference type="DNASU" id="444019"/>
<dbReference type="GeneID" id="444019"/>
<dbReference type="KEGG" id="xla:444019"/>
<dbReference type="AGR" id="Xenbase:XB-GENE-5820554"/>
<dbReference type="CTD" id="444019"/>
<dbReference type="Xenbase" id="XB-GENE-5820554">
    <property type="gene designation" value="tmem205.L"/>
</dbReference>
<dbReference type="OMA" id="FQMRAVE"/>
<dbReference type="OrthoDB" id="1641132at2759"/>
<dbReference type="Proteomes" id="UP000186698">
    <property type="component" value="Chromosome 3L"/>
</dbReference>
<dbReference type="Bgee" id="444019">
    <property type="expression patterns" value="Expressed in internal ear and 20 other cell types or tissues"/>
</dbReference>
<dbReference type="GO" id="GO:0016020">
    <property type="term" value="C:membrane"/>
    <property type="evidence" value="ECO:0007669"/>
    <property type="project" value="UniProtKB-SubCell"/>
</dbReference>
<dbReference type="InterPro" id="IPR042623">
    <property type="entry name" value="TMEM205"/>
</dbReference>
<dbReference type="InterPro" id="IPR025423">
    <property type="entry name" value="TMEM205-like"/>
</dbReference>
<dbReference type="PANTHER" id="PTHR46916">
    <property type="entry name" value="TRANSMEMBRANE PROTEIN 205"/>
    <property type="match status" value="1"/>
</dbReference>
<dbReference type="PANTHER" id="PTHR46916:SF2">
    <property type="entry name" value="TRANSMEMBRANE PROTEIN 205"/>
    <property type="match status" value="1"/>
</dbReference>
<dbReference type="Pfam" id="PF13664">
    <property type="entry name" value="DUF4149"/>
    <property type="match status" value="1"/>
</dbReference>
<keyword id="KW-0472">Membrane</keyword>
<keyword id="KW-1185">Reference proteome</keyword>
<keyword id="KW-0812">Transmembrane</keyword>
<keyword id="KW-1133">Transmembrane helix</keyword>
<accession>Q6GPW4</accession>
<gene>
    <name type="primary">tmem205</name>
</gene>
<organism>
    <name type="scientific">Xenopus laevis</name>
    <name type="common">African clawed frog</name>
    <dbReference type="NCBI Taxonomy" id="8355"/>
    <lineage>
        <taxon>Eukaryota</taxon>
        <taxon>Metazoa</taxon>
        <taxon>Chordata</taxon>
        <taxon>Craniata</taxon>
        <taxon>Vertebrata</taxon>
        <taxon>Euteleostomi</taxon>
        <taxon>Amphibia</taxon>
        <taxon>Batrachia</taxon>
        <taxon>Anura</taxon>
        <taxon>Pipoidea</taxon>
        <taxon>Pipidae</taxon>
        <taxon>Xenopodinae</taxon>
        <taxon>Xenopus</taxon>
        <taxon>Xenopus</taxon>
    </lineage>
</organism>
<sequence>MVAEGDPGNLVKIFHLLVLSASWGMQCWMTFVAGFVLIKGVPRHTFGLVQSKLFPYYNHIVLCCSFISLAIYAAYHPRELLSPSESVQISLFFTSLLVAALQARWFSPVTTKTMFKMHVIEREHSLGQGVGLSANKEGYQLLQEKDPKYKALRKRFMRYHGISSLCNLLCLLCNGANLVYIALLMPTL</sequence>
<name>TM205_XENLA</name>
<comment type="subcellular location">
    <subcellularLocation>
        <location evidence="2">Membrane</location>
        <topology evidence="2">Multi-pass membrane protein</topology>
    </subcellularLocation>
</comment>
<comment type="similarity">
    <text evidence="2">Belongs to the TMEM205 family.</text>
</comment>
<proteinExistence type="evidence at transcript level"/>
<reference key="1">
    <citation type="submission" date="2004-06" db="EMBL/GenBank/DDBJ databases">
        <authorList>
            <consortium name="NIH - Xenopus Gene Collection (XGC) project"/>
        </authorList>
    </citation>
    <scope>NUCLEOTIDE SEQUENCE [LARGE SCALE MRNA]</scope>
    <source>
        <tissue>Spleen</tissue>
    </source>
</reference>
<feature type="chain" id="PRO_0000317505" description="Transmembrane protein 205">
    <location>
        <begin position="1"/>
        <end position="188"/>
    </location>
</feature>
<feature type="transmembrane region" description="Helical" evidence="1">
    <location>
        <begin position="18"/>
        <end position="38"/>
    </location>
</feature>
<feature type="transmembrane region" description="Helical" evidence="1">
    <location>
        <begin position="53"/>
        <end position="73"/>
    </location>
</feature>
<feature type="transmembrane region" description="Helical" evidence="1">
    <location>
        <begin position="89"/>
        <end position="109"/>
    </location>
</feature>
<feature type="transmembrane region" description="Helical" evidence="1">
    <location>
        <begin position="168"/>
        <end position="188"/>
    </location>
</feature>
<evidence type="ECO:0000255" key="1"/>
<evidence type="ECO:0000305" key="2"/>